<dbReference type="GO" id="GO:0008061">
    <property type="term" value="F:chitin binding"/>
    <property type="evidence" value="ECO:0007669"/>
    <property type="project" value="UniProtKB-KW"/>
</dbReference>
<dbReference type="GO" id="GO:0050832">
    <property type="term" value="P:defense response to fungus"/>
    <property type="evidence" value="ECO:0007669"/>
    <property type="project" value="UniProtKB-KW"/>
</dbReference>
<dbReference type="GO" id="GO:0031640">
    <property type="term" value="P:killing of cells of another organism"/>
    <property type="evidence" value="ECO:0007669"/>
    <property type="project" value="UniProtKB-KW"/>
</dbReference>
<name>CB30_HYDMC</name>
<feature type="chain" id="PRO_0000161810" description="Chitin-binding protein HM30">
    <location>
        <begin position="1"/>
        <end position="15" status="greater than"/>
    </location>
</feature>
<feature type="non-terminal residue" evidence="2">
    <location>
        <position position="15"/>
    </location>
</feature>
<evidence type="ECO:0000269" key="1">
    <source>
    </source>
</evidence>
<evidence type="ECO:0000303" key="2">
    <source>
    </source>
</evidence>
<evidence type="ECO:0000305" key="3"/>
<protein>
    <recommendedName>
        <fullName>Chitin-binding protein HM30</fullName>
    </recommendedName>
</protein>
<keyword id="KW-0929">Antimicrobial</keyword>
<keyword id="KW-0147">Chitin-binding</keyword>
<keyword id="KW-0903">Direct protein sequencing</keyword>
<keyword id="KW-0295">Fungicide</keyword>
<proteinExistence type="evidence at protein level"/>
<accession>P83630</accession>
<reference evidence="3" key="1">
    <citation type="journal article" date="2002" name="Protein Expr. Purif.">
        <title>Purification and characterization of an ethylene-induced antifungal protein from leaves of Guilder rose (Hydrangea macrophylla).</title>
        <authorList>
            <person name="Yang Q."/>
            <person name="Gong Z.-Z."/>
        </authorList>
    </citation>
    <scope>PROTEIN SEQUENCE</scope>
    <scope>FUNCTION</scope>
    <scope>INDUCTION</scope>
    <scope>MASS SPECTROMETRY</scope>
    <source>
        <tissue evidence="1">Leaf</tissue>
    </source>
</reference>
<sequence length="15" mass="1875">NSMERVEELRKKLQD</sequence>
<comment type="function">
    <text evidence="1">Has antifungal activity against A.alternata, A.cucumerina, A.niger, C.gossypii, F.oxysporum, F.oxysporum subsp melonis, F.moniliforme, T.cucumeris, and V.dahliae. Has no chitinase or agglutination activities.</text>
</comment>
<comment type="induction">
    <text evidence="1">By ethylene.</text>
</comment>
<comment type="mass spectrometry" mass="30010.0" method="Electrospray" evidence="1"/>
<comment type="similarity">
    <text evidence="3">Belongs to the parathyroid hormone family.</text>
</comment>
<comment type="caution">
    <text evidence="3">14 of the 15 residues are identical to an internal region of human parathyroid hormone. That seems quite an incredible 'coincidence'.</text>
</comment>
<organism>
    <name type="scientific">Hydrangea macrophylla</name>
    <name type="common">Bigleaf hydrangea</name>
    <name type="synonym">Viburnum macrophyllum</name>
    <dbReference type="NCBI Taxonomy" id="23110"/>
    <lineage>
        <taxon>Eukaryota</taxon>
        <taxon>Viridiplantae</taxon>
        <taxon>Streptophyta</taxon>
        <taxon>Embryophyta</taxon>
        <taxon>Tracheophyta</taxon>
        <taxon>Spermatophyta</taxon>
        <taxon>Magnoliopsida</taxon>
        <taxon>eudicotyledons</taxon>
        <taxon>Gunneridae</taxon>
        <taxon>Pentapetalae</taxon>
        <taxon>asterids</taxon>
        <taxon>Cornales</taxon>
        <taxon>Hydrangeaceae</taxon>
        <taxon>Hydrangeeae</taxon>
        <taxon>Hydrangea</taxon>
        <taxon>Hydrangea sect. Macrophyllae</taxon>
    </lineage>
</organism>